<sequence length="7" mass="706">AGQNTES</sequence>
<organism>
    <name type="scientific">Gibberella zeae</name>
    <name type="common">Wheat head blight fungus</name>
    <name type="synonym">Fusarium graminearum</name>
    <dbReference type="NCBI Taxonomy" id="5518"/>
    <lineage>
        <taxon>Eukaryota</taxon>
        <taxon>Fungi</taxon>
        <taxon>Dikarya</taxon>
        <taxon>Ascomycota</taxon>
        <taxon>Pezizomycotina</taxon>
        <taxon>Sordariomycetes</taxon>
        <taxon>Hypocreomycetidae</taxon>
        <taxon>Hypocreales</taxon>
        <taxon>Nectriaceae</taxon>
        <taxon>Fusarium</taxon>
    </lineage>
</organism>
<protein>
    <recommendedName>
        <fullName>Galactose oxidase inhibitor</fullName>
    </recommendedName>
</protein>
<name>IGAO_GIBZA</name>
<reference key="1">
    <citation type="journal article" date="1972" name="Fed. Proc.">
        <title>Identification of a peptide inhibitor of galactose oxidase from Dactylium dendroides.</title>
        <authorList>
            <person name="Avigad G."/>
            <person name="Markus Z."/>
        </authorList>
    </citation>
    <scope>PROTEIN SEQUENCE</scope>
</reference>
<reference key="2">
    <citation type="journal article" date="1994" name="Mycol. Res.">
        <title>Cellulose-triggered sporulation in the galactose oxidase producing fungus Cladobotryum (Dactylium) dendroides NRRL 2903 and its re-identification as a species of Fusarium.</title>
        <authorList>
            <person name="Ogel Z.B."/>
            <person name="Brayford D."/>
            <person name="McPherson M.J."/>
        </authorList>
        <dbReference type="AGRICOLA" id="IND20498749"/>
    </citation>
    <scope>TAXONOMY</scope>
</reference>
<accession>P06294</accession>
<comment type="function">
    <text>Binds one copper ion per molecule but does not bind the galactose oxidase apoenzyme. It may inactivate the enzyme by binding to its prosthetic copper group.</text>
</comment>
<feature type="peptide" id="PRO_0000044149" description="Galactose oxidase inhibitor">
    <location>
        <begin position="1"/>
        <end position="7"/>
    </location>
</feature>
<keyword id="KW-0186">Copper</keyword>
<keyword id="KW-0903">Direct protein sequencing</keyword>
<keyword id="KW-0481">Metalloenzyme inhibitor</keyword>
<dbReference type="PIR" id="A01341">
    <property type="entry name" value="XEYDGD"/>
</dbReference>
<dbReference type="GO" id="GO:0004857">
    <property type="term" value="F:enzyme inhibitor activity"/>
    <property type="evidence" value="ECO:0007669"/>
    <property type="project" value="UniProtKB-KW"/>
</dbReference>
<proteinExistence type="evidence at protein level"/>